<dbReference type="EC" id="2.3.2.-" evidence="1"/>
<dbReference type="EC" id="2.3.2.27" evidence="10"/>
<dbReference type="EMBL" id="AY569455">
    <property type="protein sequence ID" value="AAS68363.1"/>
    <property type="molecule type" value="mRNA"/>
</dbReference>
<dbReference type="EMBL" id="AL136921">
    <property type="protein sequence ID" value="CAB66855.1"/>
    <property type="molecule type" value="mRNA"/>
</dbReference>
<dbReference type="CCDS" id="CCDS10461.1">
    <molecule id="Q6Q0C0-1"/>
</dbReference>
<dbReference type="RefSeq" id="NP_115647.2">
    <molecule id="Q6Q0C0-1"/>
    <property type="nucleotide sequence ID" value="NM_032271.2"/>
</dbReference>
<dbReference type="PDB" id="8IMS">
    <property type="method" value="X-ray"/>
    <property type="resolution" value="3.30 A"/>
    <property type="chains" value="A/B/C=270-379"/>
</dbReference>
<dbReference type="PDBsum" id="8IMS"/>
<dbReference type="SMR" id="Q6Q0C0"/>
<dbReference type="BioGRID" id="123964">
    <property type="interactions" value="131"/>
</dbReference>
<dbReference type="CORUM" id="Q6Q0C0"/>
<dbReference type="FunCoup" id="Q6Q0C0">
    <property type="interactions" value="1026"/>
</dbReference>
<dbReference type="IntAct" id="Q6Q0C0">
    <property type="interactions" value="86"/>
</dbReference>
<dbReference type="MINT" id="Q6Q0C0"/>
<dbReference type="STRING" id="9606.ENSP00000318944"/>
<dbReference type="GlyGen" id="Q6Q0C0">
    <property type="glycosylation" value="6 sites, 1 O-linked glycan (6 sites)"/>
</dbReference>
<dbReference type="iPTMnet" id="Q6Q0C0"/>
<dbReference type="PhosphoSitePlus" id="Q6Q0C0"/>
<dbReference type="BioMuta" id="TRAF7"/>
<dbReference type="DMDM" id="54036486"/>
<dbReference type="jPOST" id="Q6Q0C0"/>
<dbReference type="MassIVE" id="Q6Q0C0"/>
<dbReference type="PaxDb" id="9606-ENSP00000318944"/>
<dbReference type="PeptideAtlas" id="Q6Q0C0"/>
<dbReference type="ProteomicsDB" id="67263">
    <molecule id="Q6Q0C0-1"/>
</dbReference>
<dbReference type="ProteomicsDB" id="67264">
    <molecule id="Q6Q0C0-2"/>
</dbReference>
<dbReference type="Pumba" id="Q6Q0C0"/>
<dbReference type="Antibodypedia" id="23591">
    <property type="antibodies" value="177 antibodies from 30 providers"/>
</dbReference>
<dbReference type="DNASU" id="84231"/>
<dbReference type="Ensembl" id="ENST00000326181.11">
    <molecule id="Q6Q0C0-1"/>
    <property type="protein sequence ID" value="ENSP00000318944.6"/>
    <property type="gene ID" value="ENSG00000131653.14"/>
</dbReference>
<dbReference type="Ensembl" id="ENST00000704452.1">
    <molecule id="Q6Q0C0-1"/>
    <property type="protein sequence ID" value="ENSP00000515903.1"/>
    <property type="gene ID" value="ENSG00000131653.14"/>
</dbReference>
<dbReference type="GeneID" id="84231"/>
<dbReference type="KEGG" id="hsa:84231"/>
<dbReference type="MANE-Select" id="ENST00000326181.11">
    <property type="protein sequence ID" value="ENSP00000318944.6"/>
    <property type="RefSeq nucleotide sequence ID" value="NM_032271.3"/>
    <property type="RefSeq protein sequence ID" value="NP_115647.2"/>
</dbReference>
<dbReference type="UCSC" id="uc002cow.4">
    <molecule id="Q6Q0C0-1"/>
    <property type="organism name" value="human"/>
</dbReference>
<dbReference type="AGR" id="HGNC:20456"/>
<dbReference type="CTD" id="84231"/>
<dbReference type="DisGeNET" id="84231"/>
<dbReference type="GeneCards" id="TRAF7"/>
<dbReference type="HGNC" id="HGNC:20456">
    <property type="gene designation" value="TRAF7"/>
</dbReference>
<dbReference type="HPA" id="ENSG00000131653">
    <property type="expression patterns" value="Low tissue specificity"/>
</dbReference>
<dbReference type="MalaCards" id="TRAF7"/>
<dbReference type="MIM" id="606692">
    <property type="type" value="gene"/>
</dbReference>
<dbReference type="MIM" id="618164">
    <property type="type" value="phenotype"/>
</dbReference>
<dbReference type="neXtProt" id="NX_Q6Q0C0"/>
<dbReference type="OpenTargets" id="ENSG00000131653"/>
<dbReference type="Orphanet" id="2495">
    <property type="disease" value="Meningioma"/>
</dbReference>
<dbReference type="Orphanet" id="592570">
    <property type="disease" value="TRAF7-associated heart defect-digital anomalies-facial dysmorphism-motor and speech delay syndrome"/>
</dbReference>
<dbReference type="PharmGKB" id="PA134917323"/>
<dbReference type="VEuPathDB" id="HostDB:ENSG00000131653"/>
<dbReference type="eggNOG" id="KOG0274">
    <property type="taxonomic scope" value="Eukaryota"/>
</dbReference>
<dbReference type="eggNOG" id="KOG0297">
    <property type="taxonomic scope" value="Eukaryota"/>
</dbReference>
<dbReference type="GeneTree" id="ENSGT00940000157022"/>
<dbReference type="HOGENOM" id="CLU_026971_0_0_1"/>
<dbReference type="InParanoid" id="Q6Q0C0"/>
<dbReference type="OMA" id="CMTVTNG"/>
<dbReference type="OrthoDB" id="674604at2759"/>
<dbReference type="PAN-GO" id="Q6Q0C0">
    <property type="GO annotations" value="3 GO annotations based on evolutionary models"/>
</dbReference>
<dbReference type="PhylomeDB" id="Q6Q0C0"/>
<dbReference type="TreeFam" id="TF328643"/>
<dbReference type="PathwayCommons" id="Q6Q0C0"/>
<dbReference type="Reactome" id="R-HSA-983168">
    <property type="pathway name" value="Antigen processing: Ubiquitination &amp; Proteasome degradation"/>
</dbReference>
<dbReference type="SignaLink" id="Q6Q0C0"/>
<dbReference type="SIGNOR" id="Q6Q0C0"/>
<dbReference type="UniPathway" id="UPA00143"/>
<dbReference type="BioGRID-ORCS" id="84231">
    <property type="hits" value="44 hits in 1197 CRISPR screens"/>
</dbReference>
<dbReference type="GenomeRNAi" id="84231"/>
<dbReference type="Pharos" id="Q6Q0C0">
    <property type="development level" value="Tbio"/>
</dbReference>
<dbReference type="PRO" id="PR:Q6Q0C0"/>
<dbReference type="Proteomes" id="UP000005640">
    <property type="component" value="Chromosome 16"/>
</dbReference>
<dbReference type="RNAct" id="Q6Q0C0">
    <property type="molecule type" value="protein"/>
</dbReference>
<dbReference type="Bgee" id="ENSG00000131653">
    <property type="expression patterns" value="Expressed in stromal cell of endometrium and 163 other cell types or tissues"/>
</dbReference>
<dbReference type="ExpressionAtlas" id="Q6Q0C0">
    <property type="expression patterns" value="baseline and differential"/>
</dbReference>
<dbReference type="GO" id="GO:0031410">
    <property type="term" value="C:cytoplasmic vesicle"/>
    <property type="evidence" value="ECO:0007669"/>
    <property type="project" value="UniProtKB-KW"/>
</dbReference>
<dbReference type="GO" id="GO:0043231">
    <property type="term" value="C:intracellular membrane-bounded organelle"/>
    <property type="evidence" value="ECO:0000314"/>
    <property type="project" value="HPA"/>
</dbReference>
<dbReference type="GO" id="GO:0005634">
    <property type="term" value="C:nucleus"/>
    <property type="evidence" value="ECO:0000318"/>
    <property type="project" value="GO_Central"/>
</dbReference>
<dbReference type="GO" id="GO:0005886">
    <property type="term" value="C:plasma membrane"/>
    <property type="evidence" value="ECO:0000314"/>
    <property type="project" value="HPA"/>
</dbReference>
<dbReference type="GO" id="GO:0000151">
    <property type="term" value="C:ubiquitin ligase complex"/>
    <property type="evidence" value="ECO:0000314"/>
    <property type="project" value="UniProtKB"/>
</dbReference>
<dbReference type="GO" id="GO:0061630">
    <property type="term" value="F:ubiquitin protein ligase activity"/>
    <property type="evidence" value="ECO:0000314"/>
    <property type="project" value="UniProt"/>
</dbReference>
<dbReference type="GO" id="GO:0004842">
    <property type="term" value="F:ubiquitin-protein transferase activity"/>
    <property type="evidence" value="ECO:0000314"/>
    <property type="project" value="UniProtKB"/>
</dbReference>
<dbReference type="GO" id="GO:0008270">
    <property type="term" value="F:zinc ion binding"/>
    <property type="evidence" value="ECO:0000303"/>
    <property type="project" value="UniProtKB"/>
</dbReference>
<dbReference type="GO" id="GO:0006915">
    <property type="term" value="P:apoptotic process"/>
    <property type="evidence" value="ECO:0000314"/>
    <property type="project" value="MGI"/>
</dbReference>
<dbReference type="GO" id="GO:2001235">
    <property type="term" value="P:positive regulation of apoptotic signaling pathway"/>
    <property type="evidence" value="ECO:0000315"/>
    <property type="project" value="UniProtKB"/>
</dbReference>
<dbReference type="GO" id="GO:0043410">
    <property type="term" value="P:positive regulation of MAPK cascade"/>
    <property type="evidence" value="ECO:0000314"/>
    <property type="project" value="UniProtKB"/>
</dbReference>
<dbReference type="GO" id="GO:0043525">
    <property type="term" value="P:positive regulation of neuron apoptotic process"/>
    <property type="evidence" value="ECO:0007669"/>
    <property type="project" value="Ensembl"/>
</dbReference>
<dbReference type="GO" id="GO:2000060">
    <property type="term" value="P:positive regulation of ubiquitin-dependent protein catabolic process"/>
    <property type="evidence" value="ECO:0000314"/>
    <property type="project" value="UniProt"/>
</dbReference>
<dbReference type="GO" id="GO:0035519">
    <property type="term" value="P:protein K29-linked ubiquitination"/>
    <property type="evidence" value="ECO:0000314"/>
    <property type="project" value="UniProt"/>
</dbReference>
<dbReference type="GO" id="GO:0016567">
    <property type="term" value="P:protein ubiquitination"/>
    <property type="evidence" value="ECO:0000314"/>
    <property type="project" value="UniProtKB"/>
</dbReference>
<dbReference type="GO" id="GO:0070372">
    <property type="term" value="P:regulation of ERK1 and ERK2 cascade"/>
    <property type="evidence" value="ECO:0000315"/>
    <property type="project" value="UniProtKB"/>
</dbReference>
<dbReference type="CDD" id="cd16644">
    <property type="entry name" value="mRING-HC-C3HC3D_TRAF7"/>
    <property type="match status" value="1"/>
</dbReference>
<dbReference type="CDD" id="cd00200">
    <property type="entry name" value="WD40"/>
    <property type="match status" value="1"/>
</dbReference>
<dbReference type="FunFam" id="3.30.40.10:FF:000210">
    <property type="entry name" value="E3 ubiquitin-protein ligase TRAF7 isoform X1"/>
    <property type="match status" value="1"/>
</dbReference>
<dbReference type="FunFam" id="3.30.40.10:FF:000224">
    <property type="entry name" value="E3 ubiquitin-protein ligase TRAF7 isoform X1"/>
    <property type="match status" value="1"/>
</dbReference>
<dbReference type="FunFam" id="2.130.10.10:FF:000096">
    <property type="entry name" value="E3 ubiquitin-protein ligase TRAF7 isoform X2"/>
    <property type="match status" value="1"/>
</dbReference>
<dbReference type="FunFam" id="2.130.10.10:FF:000067">
    <property type="entry name" value="Putative E3 ubiquitin-protein ligase TRAF7"/>
    <property type="match status" value="1"/>
</dbReference>
<dbReference type="Gene3D" id="2.130.10.10">
    <property type="entry name" value="YVTN repeat-like/Quinoprotein amine dehydrogenase"/>
    <property type="match status" value="2"/>
</dbReference>
<dbReference type="Gene3D" id="3.30.40.10">
    <property type="entry name" value="Zinc/RING finger domain, C3HC4 (zinc finger)"/>
    <property type="match status" value="2"/>
</dbReference>
<dbReference type="InterPro" id="IPR020472">
    <property type="entry name" value="G-protein_beta_WD-40_rep"/>
</dbReference>
<dbReference type="InterPro" id="IPR015943">
    <property type="entry name" value="WD40/YVTN_repeat-like_dom_sf"/>
</dbReference>
<dbReference type="InterPro" id="IPR019775">
    <property type="entry name" value="WD40_repeat_CS"/>
</dbReference>
<dbReference type="InterPro" id="IPR036322">
    <property type="entry name" value="WD40_repeat_dom_sf"/>
</dbReference>
<dbReference type="InterPro" id="IPR001680">
    <property type="entry name" value="WD40_rpt"/>
</dbReference>
<dbReference type="InterPro" id="IPR027370">
    <property type="entry name" value="Znf-RING_euk"/>
</dbReference>
<dbReference type="InterPro" id="IPR001841">
    <property type="entry name" value="Znf_RING"/>
</dbReference>
<dbReference type="InterPro" id="IPR013083">
    <property type="entry name" value="Znf_RING/FYVE/PHD"/>
</dbReference>
<dbReference type="InterPro" id="IPR017907">
    <property type="entry name" value="Znf_RING_CS"/>
</dbReference>
<dbReference type="InterPro" id="IPR001293">
    <property type="entry name" value="Znf_TRAF"/>
</dbReference>
<dbReference type="PANTHER" id="PTHR19848:SF6">
    <property type="entry name" value="E3 UBIQUITIN-PROTEIN LIGASE TRAF7"/>
    <property type="match status" value="1"/>
</dbReference>
<dbReference type="PANTHER" id="PTHR19848">
    <property type="entry name" value="WD40 REPEAT PROTEIN"/>
    <property type="match status" value="1"/>
</dbReference>
<dbReference type="Pfam" id="PF00400">
    <property type="entry name" value="WD40"/>
    <property type="match status" value="5"/>
</dbReference>
<dbReference type="Pfam" id="PF13445">
    <property type="entry name" value="zf-RING_UBOX"/>
    <property type="match status" value="1"/>
</dbReference>
<dbReference type="PRINTS" id="PR00320">
    <property type="entry name" value="GPROTEINBRPT"/>
</dbReference>
<dbReference type="SMART" id="SM00184">
    <property type="entry name" value="RING"/>
    <property type="match status" value="1"/>
</dbReference>
<dbReference type="SMART" id="SM00320">
    <property type="entry name" value="WD40"/>
    <property type="match status" value="7"/>
</dbReference>
<dbReference type="SUPFAM" id="SSF57850">
    <property type="entry name" value="RING/U-box"/>
    <property type="match status" value="1"/>
</dbReference>
<dbReference type="SUPFAM" id="SSF49599">
    <property type="entry name" value="TRAF domain-like"/>
    <property type="match status" value="2"/>
</dbReference>
<dbReference type="SUPFAM" id="SSF50978">
    <property type="entry name" value="WD40 repeat-like"/>
    <property type="match status" value="1"/>
</dbReference>
<dbReference type="PROSITE" id="PS00678">
    <property type="entry name" value="WD_REPEATS_1"/>
    <property type="match status" value="2"/>
</dbReference>
<dbReference type="PROSITE" id="PS50082">
    <property type="entry name" value="WD_REPEATS_2"/>
    <property type="match status" value="5"/>
</dbReference>
<dbReference type="PROSITE" id="PS50294">
    <property type="entry name" value="WD_REPEATS_REGION"/>
    <property type="match status" value="1"/>
</dbReference>
<dbReference type="PROSITE" id="PS00518">
    <property type="entry name" value="ZF_RING_1"/>
    <property type="match status" value="1"/>
</dbReference>
<dbReference type="PROSITE" id="PS50089">
    <property type="entry name" value="ZF_RING_2"/>
    <property type="match status" value="1"/>
</dbReference>
<dbReference type="PROSITE" id="PS50145">
    <property type="entry name" value="ZF_TRAF"/>
    <property type="match status" value="1"/>
</dbReference>
<proteinExistence type="evidence at protein level"/>
<organism>
    <name type="scientific">Homo sapiens</name>
    <name type="common">Human</name>
    <dbReference type="NCBI Taxonomy" id="9606"/>
    <lineage>
        <taxon>Eukaryota</taxon>
        <taxon>Metazoa</taxon>
        <taxon>Chordata</taxon>
        <taxon>Craniata</taxon>
        <taxon>Vertebrata</taxon>
        <taxon>Euteleostomi</taxon>
        <taxon>Mammalia</taxon>
        <taxon>Eutheria</taxon>
        <taxon>Euarchontoglires</taxon>
        <taxon>Primates</taxon>
        <taxon>Haplorrhini</taxon>
        <taxon>Catarrhini</taxon>
        <taxon>Hominidae</taxon>
        <taxon>Homo</taxon>
    </lineage>
</organism>
<name>TRAF7_HUMAN</name>
<comment type="function">
    <text evidence="1 6 7 8 9 10">E3 ubiquitin and SUMO-protein ligase that plays a role in different biological processes such as innate immunity, inflammation or apoptosis (PubMed:15001576, PubMed:37086853). Potentiates MAP3K3-mediated activation of JUN/AP1 and DDIT3 transcriptional regulators (PubMed:14743216). Negatively regulates MYB transcriptional activity by sequestering it to the cytosol via SUMOylation (By similarity). Plays a role in the phosphorylation of MAPK1 and/or MAPK3, probably via its interaction with MAP3K3. Negatively regulates RLR-mediated innate immunity by promoting 'Lys-48'-linked ubiquitination of TBK1 through its RING domain to inhibit the cellular antiviral response (PubMed:37086853). Promotes 'Lys-29'-linked polyubiquitination of NEMO/IKBKG and RELA leading to targeting these two proteins to lysosomal degradative pathways, reducing the transcriptional activity of NF-kappa-B (PubMed:21518757).</text>
</comment>
<comment type="catalytic activity">
    <reaction evidence="10">
        <text>S-ubiquitinyl-[E2 ubiquitin-conjugating enzyme]-L-cysteine + [acceptor protein]-L-lysine = [E2 ubiquitin-conjugating enzyme]-L-cysteine + N(6)-ubiquitinyl-[acceptor protein]-L-lysine.</text>
        <dbReference type="EC" id="2.3.2.27"/>
    </reaction>
</comment>
<comment type="pathway">
    <text>Protein modification; protein ubiquitination.</text>
</comment>
<comment type="subunit">
    <text evidence="6 7">Homodimer. Interacts with MAP3K3 and promotes the kinase activity of this enzyme.</text>
</comment>
<comment type="interaction">
    <interactant intactId="EBI-307556">
        <id>Q6Q0C0</id>
    </interactant>
    <interactant intactId="EBI-11521003">
        <id>Q9UIA0</id>
        <label>CYTH4</label>
    </interactant>
    <organismsDiffer>false</organismsDiffer>
    <experiments>2</experiments>
</comment>
<comment type="interaction">
    <interactant intactId="EBI-307556">
        <id>Q6Q0C0</id>
    </interactant>
    <interactant intactId="EBI-2830566">
        <id>Q9H400</id>
        <label>LIME1</label>
    </interactant>
    <organismsDiffer>false</organismsDiffer>
    <experiments>2</experiments>
</comment>
<comment type="interaction">
    <interactant intactId="EBI-307556">
        <id>Q6Q0C0</id>
    </interactant>
    <interactant intactId="EBI-307281">
        <id>Q99759</id>
        <label>MAP3K3</label>
    </interactant>
    <organismsDiffer>false</organismsDiffer>
    <experiments>3</experiments>
</comment>
<comment type="interaction">
    <interactant intactId="EBI-307556">
        <id>Q6Q0C0</id>
    </interactant>
    <interactant intactId="EBI-6116422">
        <id>Q9ERK0</id>
        <label>Ripk4</label>
    </interactant>
    <organismsDiffer>true</organismsDiffer>
    <experiments>2</experiments>
</comment>
<comment type="subcellular location">
    <subcellularLocation>
        <location evidence="6">Cytoplasmic vesicle</location>
    </subcellularLocation>
    <subcellularLocation>
        <location evidence="8 10">Cytoplasm</location>
    </subcellularLocation>
    <subcellularLocation>
        <location evidence="10">Nucleus</location>
    </subcellularLocation>
    <text>Colocalizes with MAP3K3 to vesicle-like structures throughout the cytoplasm.</text>
</comment>
<comment type="alternative products">
    <event type="alternative splicing"/>
    <isoform>
        <id>Q6Q0C0-1</id>
        <name evidence="7">1</name>
        <sequence type="displayed"/>
    </isoform>
    <isoform>
        <id>Q6Q0C0-2</id>
        <name evidence="7">2</name>
        <sequence type="described" ref="VSP_051607"/>
    </isoform>
</comment>
<comment type="tissue specificity">
    <text evidence="7">Ubiquitously expressed with high levels in skeletal muscle, heart, colon, spleen, kidney, liver and placenta.</text>
</comment>
<comment type="PTM">
    <text evidence="6">Phosphorylated by MAP3K3.</text>
</comment>
<comment type="PTM">
    <text>Ubiquitinates itself upon phosphorylation.</text>
</comment>
<comment type="disease" evidence="9">
    <disease id="DI-05370">
        <name>Cardiac, facial, and digital anomalies with developmental delay</name>
        <acronym>CAFDADD</acronym>
        <description>An autosomal dominant disorder characterized by delayed motor and speech development, developmental regression, congenital heart defects, limb and digital anomalies, and dysmorphic features. Cardiac features include pulmonary stenosis, patent ductus arteriosus, aortic coarctation, valvular defects, hypoplastic left heart, double outlet right ventricle, and conduction abnormalities. Dysmorphic facial features include multiple hair whorls or hairline abnormalities, ptosis, epicanthal folds, and low-set or dysplastic ears.</description>
        <dbReference type="MIM" id="618164"/>
    </disease>
    <text>The disease is caused by variants affecting the gene represented in this entry.</text>
</comment>
<comment type="similarity">
    <text evidence="13">Belongs to the WD repeat TRAF7 family.</text>
</comment>
<keyword id="KW-0002">3D-structure</keyword>
<keyword id="KW-0025">Alternative splicing</keyword>
<keyword id="KW-0053">Apoptosis</keyword>
<keyword id="KW-0963">Cytoplasm</keyword>
<keyword id="KW-0968">Cytoplasmic vesicle</keyword>
<keyword id="KW-0225">Disease variant</keyword>
<keyword id="KW-0479">Metal-binding</keyword>
<keyword id="KW-0539">Nucleus</keyword>
<keyword id="KW-0597">Phosphoprotein</keyword>
<keyword id="KW-1267">Proteomics identification</keyword>
<keyword id="KW-1185">Reference proteome</keyword>
<keyword id="KW-0677">Repeat</keyword>
<keyword id="KW-0804">Transcription</keyword>
<keyword id="KW-0805">Transcription regulation</keyword>
<keyword id="KW-0808">Transferase</keyword>
<keyword id="KW-0832">Ubl conjugation</keyword>
<keyword id="KW-0833">Ubl conjugation pathway</keyword>
<keyword id="KW-0853">WD repeat</keyword>
<keyword id="KW-0862">Zinc</keyword>
<keyword id="KW-0863">Zinc-finger</keyword>
<evidence type="ECO:0000250" key="1">
    <source>
        <dbReference type="UniProtKB" id="Q922B6"/>
    </source>
</evidence>
<evidence type="ECO:0000255" key="2"/>
<evidence type="ECO:0000255" key="3">
    <source>
        <dbReference type="PROSITE-ProRule" id="PRU00175"/>
    </source>
</evidence>
<evidence type="ECO:0000255" key="4">
    <source>
        <dbReference type="PROSITE-ProRule" id="PRU00207"/>
    </source>
</evidence>
<evidence type="ECO:0000256" key="5">
    <source>
        <dbReference type="SAM" id="MobiDB-lite"/>
    </source>
</evidence>
<evidence type="ECO:0000269" key="6">
    <source>
    </source>
</evidence>
<evidence type="ECO:0000269" key="7">
    <source>
    </source>
</evidence>
<evidence type="ECO:0000269" key="8">
    <source>
    </source>
</evidence>
<evidence type="ECO:0000269" key="9">
    <source>
    </source>
</evidence>
<evidence type="ECO:0000269" key="10">
    <source>
    </source>
</evidence>
<evidence type="ECO:0000303" key="11">
    <source>
    </source>
</evidence>
<evidence type="ECO:0000303" key="12">
    <source>
    </source>
</evidence>
<evidence type="ECO:0000305" key="13"/>
<evidence type="ECO:0000312" key="14">
    <source>
        <dbReference type="EMBL" id="AAS68363.1"/>
    </source>
</evidence>
<evidence type="ECO:0007744" key="15">
    <source>
    </source>
</evidence>
<evidence type="ECO:0007744" key="16">
    <source>
    </source>
</evidence>
<evidence type="ECO:0007829" key="17">
    <source>
        <dbReference type="PDB" id="8IMS"/>
    </source>
</evidence>
<protein>
    <recommendedName>
        <fullName>E3 ubiquitin-protein ligase TRAF7</fullName>
        <ecNumber evidence="1">2.3.2.-</ecNumber>
        <ecNumber evidence="10">2.3.2.27</ecNumber>
    </recommendedName>
    <alternativeName>
        <fullName>RING finger and WD repeat-containing protein 1</fullName>
    </alternativeName>
    <alternativeName>
        <fullName>RING finger protein 119</fullName>
    </alternativeName>
    <alternativeName>
        <fullName evidence="13">RING-type E3 ubiquitin transferase TRAF7</fullName>
    </alternativeName>
    <alternativeName>
        <fullName>TNF receptor-associated factor 7</fullName>
    </alternativeName>
</protein>
<gene>
    <name type="primary">TRAF7</name>
    <name type="synonym">RFWD1</name>
    <name type="synonym">RNF119</name>
</gene>
<accession>Q6Q0C0</accession>
<accession>Q9H073</accession>
<reference evidence="13 14" key="1">
    <citation type="journal article" date="2004" name="J. Biol. Chem.">
        <title>TRAF7 potentiates MEKK3-induced AP1 and CHOP activation and induces apoptosis.</title>
        <authorList>
            <person name="Xu L.-G."/>
            <person name="Li L.-Y."/>
            <person name="Shu H.-B."/>
        </authorList>
    </citation>
    <scope>NUCLEOTIDE SEQUENCE [MRNA] (ISOFORM 1)</scope>
    <scope>FUNCTION</scope>
    <scope>TISSUE SPECIFICITY</scope>
    <scope>ALTERNATIVE SPLICING</scope>
    <scope>INTERACTION WITH MAP3K3</scope>
</reference>
<reference key="2">
    <citation type="journal article" date="2001" name="Genome Res.">
        <title>Towards a catalog of human genes and proteins: sequencing and analysis of 500 novel complete protein coding human cDNAs.</title>
        <authorList>
            <person name="Wiemann S."/>
            <person name="Weil B."/>
            <person name="Wellenreuther R."/>
            <person name="Gassenhuber J."/>
            <person name="Glassl S."/>
            <person name="Ansorge W."/>
            <person name="Boecher M."/>
            <person name="Bloecker H."/>
            <person name="Bauersachs S."/>
            <person name="Blum H."/>
            <person name="Lauber J."/>
            <person name="Duesterhoeft A."/>
            <person name="Beyer A."/>
            <person name="Koehrer K."/>
            <person name="Strack N."/>
            <person name="Mewes H.-W."/>
            <person name="Ottenwaelder B."/>
            <person name="Obermaier B."/>
            <person name="Tampe J."/>
            <person name="Heubner D."/>
            <person name="Wambutt R."/>
            <person name="Korn B."/>
            <person name="Klein M."/>
            <person name="Poustka A."/>
        </authorList>
    </citation>
    <scope>NUCLEOTIDE SEQUENCE [LARGE SCALE MRNA] (ISOFORM 2)</scope>
    <source>
        <tissue>Uterus</tissue>
    </source>
</reference>
<reference evidence="13" key="3">
    <citation type="journal article" date="2004" name="Nat. Cell Biol.">
        <title>A physical and functional map of the human TNF-alpha/NF-kappa B signal transduction pathway.</title>
        <authorList>
            <person name="Bouwmeester T."/>
            <person name="Bauch A."/>
            <person name="Ruffner H."/>
            <person name="Angrand P.-O."/>
            <person name="Bergamini G."/>
            <person name="Croughton K."/>
            <person name="Cruciat C."/>
            <person name="Eberhard D."/>
            <person name="Gagneur J."/>
            <person name="Ghidelli S."/>
            <person name="Hopf C."/>
            <person name="Huhse B."/>
            <person name="Mangano R."/>
            <person name="Michon A.-M."/>
            <person name="Schirle M."/>
            <person name="Schlegl J."/>
            <person name="Schwab M."/>
            <person name="Stein M.A."/>
            <person name="Bauer A."/>
            <person name="Casari G."/>
            <person name="Drewes G."/>
            <person name="Gavin A.-C."/>
            <person name="Jackson D.B."/>
            <person name="Joberty G."/>
            <person name="Neubauer G."/>
            <person name="Rick J."/>
            <person name="Kuster B."/>
            <person name="Superti-Furga G."/>
        </authorList>
    </citation>
    <scope>FUNCTION</scope>
    <scope>PHOSPHORYLATION</scope>
    <scope>SUBCELLULAR LOCATION</scope>
    <scope>HOMODIMERIZATION</scope>
    <scope>INTERACTION WITH MAP3K3</scope>
</reference>
<reference key="4">
    <citation type="journal article" date="2008" name="Proc. Natl. Acad. Sci. U.S.A.">
        <title>A quantitative atlas of mitotic phosphorylation.</title>
        <authorList>
            <person name="Dephoure N."/>
            <person name="Zhou C."/>
            <person name="Villen J."/>
            <person name="Beausoleil S.A."/>
            <person name="Bakalarski C.E."/>
            <person name="Elledge S.J."/>
            <person name="Gygi S.P."/>
        </authorList>
    </citation>
    <scope>PHOSPHORYLATION [LARGE SCALE ANALYSIS] AT SER-88 AND SER-91</scope>
    <scope>IDENTIFICATION BY MASS SPECTROMETRY [LARGE SCALE ANALYSIS]</scope>
    <source>
        <tissue>Cervix carcinoma</tissue>
    </source>
</reference>
<reference key="5">
    <citation type="journal article" date="2011" name="J. Biol. Chem.">
        <title>TRAF7 protein promotes Lys-29-linked polyubiquitination of IkappaB kinase (IKKgamma)/NF-kappaB essential modulator (NEMO) and p65/RelA protein and represses NF-kappaB activation.</title>
        <authorList>
            <person name="Zotti T."/>
            <person name="Uva A."/>
            <person name="Ferravante A."/>
            <person name="Vessichelli M."/>
            <person name="Scudiero I."/>
            <person name="Ceccarelli M."/>
            <person name="Vito P."/>
            <person name="Stilo R."/>
        </authorList>
    </citation>
    <scope>FUNCTION</scope>
    <scope>SUBCELLULAR LOCATION</scope>
</reference>
<reference key="6">
    <citation type="journal article" date="2013" name="J. Proteome Res.">
        <title>Toward a comprehensive characterization of a human cancer cell phosphoproteome.</title>
        <authorList>
            <person name="Zhou H."/>
            <person name="Di Palma S."/>
            <person name="Preisinger C."/>
            <person name="Peng M."/>
            <person name="Polat A.N."/>
            <person name="Heck A.J."/>
            <person name="Mohammed S."/>
        </authorList>
    </citation>
    <scope>PHOSPHORYLATION [LARGE SCALE ANALYSIS] AT SER-61</scope>
    <scope>IDENTIFICATION BY MASS SPECTROMETRY [LARGE SCALE ANALYSIS]</scope>
    <source>
        <tissue>Cervix carcinoma</tissue>
        <tissue>Erythroleukemia</tissue>
    </source>
</reference>
<reference key="7">
    <citation type="journal article" date="2018" name="Am. J. Hum. Genet.">
        <title>De novo missense variants in TRAF7 cause developmental delay, congenital anomalies, and dysmorphic features.</title>
        <authorList>
            <consortium name="Undiagnosed Diseases Network"/>
            <person name="Tokita M.J."/>
            <person name="Chen C.A."/>
            <person name="Chitayat D."/>
            <person name="Macnamara E."/>
            <person name="Rosenfeld J.A."/>
            <person name="Hanchard N."/>
            <person name="Lewis A.M."/>
            <person name="Brown C.W."/>
            <person name="Marom R."/>
            <person name="Shao Y."/>
            <person name="Novacic D."/>
            <person name="Wolfe L."/>
            <person name="Wahl C."/>
            <person name="Tifft C.J."/>
            <person name="Toro C."/>
            <person name="Bernstein J.A."/>
            <person name="Hale C.L."/>
            <person name="Silver J."/>
            <person name="Hudgins L."/>
            <person name="Ananth A."/>
            <person name="Hanson-Kahn A."/>
            <person name="Shuster S."/>
            <person name="Magoulas P.L."/>
            <person name="Patel V.N."/>
            <person name="Zhu W."/>
            <person name="Chen S.M."/>
            <person name="Jiang Y."/>
            <person name="Liu P."/>
            <person name="Eng C.M."/>
            <person name="Batkovskyte D."/>
            <person name="di Ronza A."/>
            <person name="Sardiello M."/>
            <person name="Lee B.H."/>
            <person name="Schaaf C.P."/>
            <person name="Yang Y."/>
            <person name="Wang X."/>
        </authorList>
    </citation>
    <scope>FUNCTION</scope>
    <scope>INVOLVEMENT IN CAFDADD</scope>
    <scope>VARIANTS CAFDADD GLU-346; GLY-371; ALA-601 AND GLN-655</scope>
    <scope>CHARACTERIZATION OF VARIANTS CAFDADD GLU-346; GLY-371; ALA-601 AND GLN-655</scope>
</reference>
<reference key="8">
    <citation type="journal article" date="2023" name="Virol. Sin.">
        <title>TRAF7 negatively regulates the RLR signaling pathway by facilitating the K48-linked ubiquitination of TBK1.</title>
        <authorList>
            <person name="Huang J.P."/>
            <person name="Yang Y.X."/>
            <person name="Chen T."/>
            <person name="Wang D.D."/>
            <person name="Li J."/>
            <person name="Xu L.G."/>
        </authorList>
    </citation>
    <scope>FUNCTION</scope>
    <scope>SUBCELLULAR LOCATION</scope>
    <scope>CATALYTIC ACTIVITY</scope>
    <scope>MUTAGENESIS OF CYS-131</scope>
</reference>
<sequence length="670" mass="74609">MSSGKSARYNRFSGGPSNLPTPDVTTGTRMETTFGPAFSAVTTITKADGTSTYKQHCRTPSSSSTLAYSPRDEEDSMPPISTPRRSDSAISVRSLHSESSMSLRSTFSLPEEEEEPEPLVFAEQPSVKLCCQLCCSVFKDPVITTCGHTFCRRCALKSEKCPVDNVKLTVVVNNIAVAEQIGELFIHCRHGCRVAGSGKPPIFEVDPRGCPFTIKLSARKDHEGSCDYRPVRCPNNPSCPPLLRMNLEAHLKECEHIKCPHSKYGCTFIGNQDTYETHLETCRFEGLKEFLQQTDDRFHEMHVALAQKDQEIAFLRSMLGKLSEKIDQLEKSLELKFDVLDENQSKLSEDLMEFRRDASMLNDELSHINARLNMGILGSYDPQQIFKCKGTFVGHQGPVWCLCVYSMGDLLFSGSSDKTIKVWDTCTTYKCQKTLEGHDGIVLALCIQGCKLYSGSADCTIIVWDIQNLQKVNTIRAHDNPVCTLVSSHNVLFSGSLKAIKVWDIVGTELKLKKELTGLNHWVRALVAAQSYLYSGSYQTIKIWDIRTLDCIHVLQTSGGSVYSIAVTNHHIVCGTYENLIHVWDIESKEQVRTLTGHVGTVYALAVISTPDQTKVFSASYDRSLRVWSMDNMICTQTLLRHQGSVTALAVSRGRLFSGAVDSTVKVWTC</sequence>
<feature type="chain" id="PRO_0000051296" description="E3 ubiquitin-protein ligase TRAF7">
    <location>
        <begin position="1"/>
        <end position="670"/>
    </location>
</feature>
<feature type="repeat" description="WD 1" evidence="2">
    <location>
        <begin position="394"/>
        <end position="433"/>
    </location>
</feature>
<feature type="repeat" description="WD 2" evidence="2">
    <location>
        <begin position="437"/>
        <end position="474"/>
    </location>
</feature>
<feature type="repeat" description="WD 3" evidence="2">
    <location>
        <begin position="477"/>
        <end position="513"/>
    </location>
</feature>
<feature type="repeat" description="WD 4" evidence="2">
    <location>
        <begin position="515"/>
        <end position="554"/>
    </location>
</feature>
<feature type="repeat" description="WD 5" evidence="2">
    <location>
        <begin position="557"/>
        <end position="594"/>
    </location>
</feature>
<feature type="repeat" description="WD 6" evidence="2">
    <location>
        <begin position="597"/>
        <end position="638"/>
    </location>
</feature>
<feature type="repeat" description="WD 7" evidence="2">
    <location>
        <begin position="641"/>
        <end position="669"/>
    </location>
</feature>
<feature type="zinc finger region" description="RING-type" evidence="3">
    <location>
        <begin position="131"/>
        <end position="165"/>
    </location>
</feature>
<feature type="zinc finger region" description="TRAF-type" evidence="4">
    <location>
        <begin position="222"/>
        <end position="276"/>
    </location>
</feature>
<feature type="region of interest" description="Disordered" evidence="5">
    <location>
        <begin position="1"/>
        <end position="37"/>
    </location>
</feature>
<feature type="region of interest" description="Disordered" evidence="5">
    <location>
        <begin position="49"/>
        <end position="97"/>
    </location>
</feature>
<feature type="compositionally biased region" description="Polar residues" evidence="5">
    <location>
        <begin position="15"/>
        <end position="31"/>
    </location>
</feature>
<feature type="compositionally biased region" description="Polar residues" evidence="5">
    <location>
        <begin position="49"/>
        <end position="67"/>
    </location>
</feature>
<feature type="modified residue" description="Phosphoserine" evidence="16">
    <location>
        <position position="61"/>
    </location>
</feature>
<feature type="modified residue" description="Phosphoserine" evidence="15">
    <location>
        <position position="88"/>
    </location>
</feature>
<feature type="modified residue" description="Phosphoserine" evidence="15">
    <location>
        <position position="91"/>
    </location>
</feature>
<feature type="splice variant" id="VSP_051607" description="In isoform 2." evidence="11 12">
    <location>
        <begin position="1"/>
        <end position="76"/>
    </location>
</feature>
<feature type="sequence variant" id="VAR_081685" description="In CAFDADD; no significant effect on phosphorylation of MAPK1 and/or MAPK3; dbSNP:rs1567252467." evidence="9">
    <original>K</original>
    <variation>E</variation>
    <location>
        <position position="346"/>
    </location>
</feature>
<feature type="sequence variant" id="VAR_081686" description="In CAFDADD; decreased phosphorylation of MAPK1 and/or MAPK3; dbSNP:rs1567252659." evidence="9">
    <original>R</original>
    <variation>G</variation>
    <location>
        <position position="371"/>
    </location>
</feature>
<feature type="sequence variant" id="VAR_081687" description="In CAFDADD; decreased phosphorylation of MAPK1 and/or MAPK3; dbSNP:rs1567254067." evidence="9">
    <original>T</original>
    <variation>A</variation>
    <location>
        <position position="601"/>
    </location>
</feature>
<feature type="sequence variant" id="VAR_081688" description="In CAFDADD; decreased phosphorylation of MAPK1 and/or MAPK3; dbSNP:rs1331463984." evidence="9">
    <original>R</original>
    <variation>Q</variation>
    <location>
        <position position="655"/>
    </location>
</feature>
<feature type="mutagenesis site" description="Complete loss of IFN-beta promoter inhibition after viral infection." evidence="10">
    <original>C</original>
    <variation>S</variation>
    <location>
        <position position="131"/>
    </location>
</feature>
<feature type="helix" evidence="17">
    <location>
        <begin position="288"/>
        <end position="376"/>
    </location>
</feature>